<proteinExistence type="inferred from homology"/>
<organism>
    <name type="scientific">Mycobacterium tuberculosis (strain ATCC 25177 / H37Ra)</name>
    <dbReference type="NCBI Taxonomy" id="419947"/>
    <lineage>
        <taxon>Bacteria</taxon>
        <taxon>Bacillati</taxon>
        <taxon>Actinomycetota</taxon>
        <taxon>Actinomycetes</taxon>
        <taxon>Mycobacteriales</taxon>
        <taxon>Mycobacteriaceae</taxon>
        <taxon>Mycobacterium</taxon>
        <taxon>Mycobacterium tuberculosis complex</taxon>
    </lineage>
</organism>
<name>LPRG_MYCTA</name>
<comment type="function">
    <text evidence="1 4">Helps membrane protein MRA_1419 (P55) transport triacylglycerides (TAG) and lipoglycans across the inner cell membrane into the periplasm and probably ultimately to the outer membrane (PubMed:25356793). Binds TAG in its hydrophobic cavity and transfers it between lipid bilayers (By similarity). TAG probably regulates lipid metabolism and growth regulation and plays a structural role in the outer membrane (By similarity). Binds di- and triacylated phosphatidyl-myo-inositol mannosides (PIMs), and glycolipid lipoglycan modulins lipoarabinomannan (LAM) and lipomannan (LM) (PubMed:25356793). Probably facilitates recognition of glycolipids by TLR2 (By similarity). Required for activity of drug efflux transporter MRA_1419 (By similarity). Required, probably with MRA_1419, for normal surface localization of LAM (PubMed:25356793).</text>
</comment>
<comment type="function">
    <text evidence="1">Constitutes a host TLR2 agonist (toll-like receptor).</text>
</comment>
<comment type="subcellular location">
    <subcellularLocation>
        <location evidence="3">Cell inner membrane</location>
        <topology evidence="3">Lipid-anchor</topology>
        <orientation evidence="7">Periplasmic side</orientation>
    </subcellularLocation>
    <subcellularLocation>
        <location evidence="1">Secreted</location>
        <location evidence="1">Cell wall</location>
    </subcellularLocation>
    <subcellularLocation>
        <location evidence="1">Secreted</location>
    </subcellularLocation>
</comment>
<comment type="induction">
    <text evidence="8">Part of the lprG-MRA_1419 operon (PubMed:25356793).</text>
</comment>
<comment type="domain">
    <text evidence="1">Forms a U-shaped beta-half-barrel with a small hydrophobic cavity able to hold a triacylated lipid or triacylglyceride (By similarity). A flexible lid region may move to accommodate different TAG molecules (By similarity).</text>
</comment>
<comment type="PTM">
    <text evidence="2">Modified by Lgt on Cys-27 with an S-linked diacylglyceral, signal peptide is removed by LspA, Cys-27 is further modifed with a fatty acid on its amino group by Lnt yielding a triacylated protein (By similarity).</text>
</comment>
<comment type="disruption phenotype">
    <text evidence="4">Single deletion mutant (probably without MRA_1419) has decreased surface-exposed glycolipid lipoarabinomannan (LAM), although cellular LAM, LM and PIM content is normal (PubMed:25356793).</text>
</comment>
<comment type="miscellaneous">
    <text evidence="8">Bacterial LAM blocks host cell phagosome-lysosome fusion and is one way in which M.tuberculosis evades the host immune system.</text>
</comment>
<comment type="miscellaneous">
    <text evidence="7">Triacylglycerides accumulate in lipid droplets in the cytoplasm of M.tuberculosis stationary phase and dormant bacteria, and are used as an energy source during starvation.</text>
</comment>
<comment type="similarity">
    <text evidence="7">Belongs to the LppX/LprAFG lipoprotein family.</text>
</comment>
<dbReference type="EMBL" id="CP000611">
    <property type="protein sequence ID" value="ABQ73163.1"/>
    <property type="molecule type" value="Genomic_DNA"/>
</dbReference>
<dbReference type="RefSeq" id="WP_003407315.1">
    <property type="nucleotide sequence ID" value="NZ_CP016972.1"/>
</dbReference>
<dbReference type="SMR" id="A5U2B3"/>
<dbReference type="KEGG" id="mra:MRA_1420"/>
<dbReference type="eggNOG" id="ENOG50338Y0">
    <property type="taxonomic scope" value="Bacteria"/>
</dbReference>
<dbReference type="HOGENOM" id="CLU_074100_1_0_11"/>
<dbReference type="Proteomes" id="UP000001988">
    <property type="component" value="Chromosome"/>
</dbReference>
<dbReference type="GO" id="GO:0005576">
    <property type="term" value="C:extracellular region"/>
    <property type="evidence" value="ECO:0007669"/>
    <property type="project" value="UniProtKB-SubCell"/>
</dbReference>
<dbReference type="GO" id="GO:0005886">
    <property type="term" value="C:plasma membrane"/>
    <property type="evidence" value="ECO:0007669"/>
    <property type="project" value="UniProtKB-SubCell"/>
</dbReference>
<dbReference type="GO" id="GO:0008289">
    <property type="term" value="F:lipid binding"/>
    <property type="evidence" value="ECO:0007669"/>
    <property type="project" value="UniProtKB-KW"/>
</dbReference>
<dbReference type="GO" id="GO:0006869">
    <property type="term" value="P:lipid transport"/>
    <property type="evidence" value="ECO:0007669"/>
    <property type="project" value="UniProtKB-KW"/>
</dbReference>
<dbReference type="CDD" id="cd16334">
    <property type="entry name" value="LppX-like"/>
    <property type="match status" value="1"/>
</dbReference>
<dbReference type="FunFam" id="2.50.20.20:FF:000004">
    <property type="entry name" value="Lipoarabinomannan carrier protein LprG"/>
    <property type="match status" value="1"/>
</dbReference>
<dbReference type="Gene3D" id="2.50.20.20">
    <property type="match status" value="1"/>
</dbReference>
<dbReference type="InterPro" id="IPR029046">
    <property type="entry name" value="LolA/LolB/LppX"/>
</dbReference>
<dbReference type="InterPro" id="IPR009830">
    <property type="entry name" value="LppX/LprAFG"/>
</dbReference>
<dbReference type="Pfam" id="PF07161">
    <property type="entry name" value="LppX_LprAFG"/>
    <property type="match status" value="1"/>
</dbReference>
<dbReference type="SUPFAM" id="SSF89392">
    <property type="entry name" value="Prokaryotic lipoproteins and lipoprotein localization factors"/>
    <property type="match status" value="1"/>
</dbReference>
<dbReference type="PROSITE" id="PS51257">
    <property type="entry name" value="PROKAR_LIPOPROTEIN"/>
    <property type="match status" value="1"/>
</dbReference>
<protein>
    <recommendedName>
        <fullName evidence="8">Lipoarabinomannan carrier protein LprG</fullName>
    </recommendedName>
    <alternativeName>
        <fullName>27 kDa lipoprotein</fullName>
    </alternativeName>
    <alternativeName>
        <fullName>Antigen P27</fullName>
    </alternativeName>
    <alternativeName>
        <fullName evidence="6">Lipoprotein LprG</fullName>
    </alternativeName>
    <alternativeName>
        <fullName>Triacylglyceride transfer protein LprG</fullName>
    </alternativeName>
</protein>
<keyword id="KW-0997">Cell inner membrane</keyword>
<keyword id="KW-1003">Cell membrane</keyword>
<keyword id="KW-0134">Cell wall</keyword>
<keyword id="KW-0445">Lipid transport</keyword>
<keyword id="KW-0446">Lipid-binding</keyword>
<keyword id="KW-0449">Lipoprotein</keyword>
<keyword id="KW-0472">Membrane</keyword>
<keyword id="KW-0564">Palmitate</keyword>
<keyword id="KW-1185">Reference proteome</keyword>
<keyword id="KW-0964">Secreted</keyword>
<keyword id="KW-0732">Signal</keyword>
<keyword id="KW-0813">Transport</keyword>
<gene>
    <name evidence="5" type="primary">lprG</name>
    <name type="ordered locus">MRA_1420</name>
</gene>
<accession>A5U2B3</accession>
<feature type="signal peptide" evidence="3">
    <location>
        <begin position="1"/>
        <end position="26"/>
    </location>
</feature>
<feature type="chain" id="PRO_0000434646" description="Lipoarabinomannan carrier protein LprG">
    <location>
        <begin position="27"/>
        <end position="236"/>
    </location>
</feature>
<feature type="lipid moiety-binding region" description="N-palmitoyl cysteine" evidence="3">
    <location>
        <position position="27"/>
    </location>
</feature>
<feature type="lipid moiety-binding region" description="S-diacylglycerol cysteine" evidence="3">
    <location>
        <position position="27"/>
    </location>
</feature>
<sequence length="236" mass="24548">MRTPRRHCRRIAVLAAVSIAATVVAGCSSGSKPSGGPLPDAKPLVEEATAQTKALKSAHMVLTVNGKIPGLSLKTLSGDLTTNPTAATGNVKLTLGGSDIDADFVVFDGILYATLTPNQWSDFGPAADIYDPAQVLNPDTGLANVLANFADAKAEGRDTINGQNTIRISGKVSAQAVNQIAPPFNATQPVPATVWIQETGDHQLAQAQLDRGSGNSVQMTLSKWGEKVQVTKPPVS</sequence>
<evidence type="ECO:0000250" key="1">
    <source>
        <dbReference type="UniProtKB" id="P9WK45"/>
    </source>
</evidence>
<evidence type="ECO:0000250" key="2">
    <source>
        <dbReference type="UniProtKB" id="P9WK47"/>
    </source>
</evidence>
<evidence type="ECO:0000255" key="3">
    <source>
        <dbReference type="PROSITE-ProRule" id="PRU00303"/>
    </source>
</evidence>
<evidence type="ECO:0000269" key="4">
    <source>
    </source>
</evidence>
<evidence type="ECO:0000303" key="5">
    <source>
    </source>
</evidence>
<evidence type="ECO:0000303" key="6">
    <source>
    </source>
</evidence>
<evidence type="ECO:0000305" key="7"/>
<evidence type="ECO:0000305" key="8">
    <source>
    </source>
</evidence>
<reference key="1">
    <citation type="journal article" date="2008" name="PLoS ONE">
        <title>Genetic basis of virulence attenuation revealed by comparative genomic analysis of Mycobacterium tuberculosis strain H37Ra versus H37Rv.</title>
        <authorList>
            <person name="Zheng H."/>
            <person name="Lu L."/>
            <person name="Wang B."/>
            <person name="Pu S."/>
            <person name="Zhang X."/>
            <person name="Zhu G."/>
            <person name="Shi W."/>
            <person name="Zhang L."/>
            <person name="Wang H."/>
            <person name="Wang S."/>
            <person name="Zhao G."/>
            <person name="Zhang Y."/>
        </authorList>
    </citation>
    <scope>NUCLEOTIDE SEQUENCE [LARGE SCALE GENOMIC DNA]</scope>
    <source>
        <strain>ATCC 25177 / H37Ra</strain>
    </source>
</reference>
<reference key="2">
    <citation type="journal article" date="2014" name="PLoS Pathog.">
        <title>Mycobacterium tuberculosis lipoprotein LprG binds lipoarabinomannan and determines its cell envelope localization to control phagolysosomal fusion.</title>
        <authorList>
            <person name="Shukla S."/>
            <person name="Richardson E.T."/>
            <person name="Athman J.J."/>
            <person name="Shi L."/>
            <person name="Wearsch P.A."/>
            <person name="McDonald D."/>
            <person name="Banaei N."/>
            <person name="Boom W.H."/>
            <person name="Jackson M."/>
            <person name="Harding C.V."/>
        </authorList>
    </citation>
    <scope>FUNCTION</scope>
    <scope>DISRUPTION PHENOTYPE</scope>
    <source>
        <strain>ATCC 25177 / H37Ra</strain>
    </source>
</reference>